<proteinExistence type="evidence at protein level"/>
<reference key="1">
    <citation type="journal article" date="1997" name="J. Exp. Biol.">
        <title>Molecular genetic analysis of V-ATPase function in Drosophila melanogaster.</title>
        <authorList>
            <person name="Dow J.A.T."/>
            <person name="Davies S.A."/>
            <person name="Guo Y."/>
            <person name="Graham S."/>
            <person name="Finbow M.E."/>
            <person name="Kaiser K."/>
        </authorList>
    </citation>
    <scope>NUCLEOTIDE SEQUENCE [MRNA]</scope>
    <source>
        <strain>Canton-S</strain>
        <strain>Oregon-R</strain>
    </source>
</reference>
<reference key="2">
    <citation type="journal article" date="2000" name="Science">
        <title>The genome sequence of Drosophila melanogaster.</title>
        <authorList>
            <person name="Adams M.D."/>
            <person name="Celniker S.E."/>
            <person name="Holt R.A."/>
            <person name="Evans C.A."/>
            <person name="Gocayne J.D."/>
            <person name="Amanatides P.G."/>
            <person name="Scherer S.E."/>
            <person name="Li P.W."/>
            <person name="Hoskins R.A."/>
            <person name="Galle R.F."/>
            <person name="George R.A."/>
            <person name="Lewis S.E."/>
            <person name="Richards S."/>
            <person name="Ashburner M."/>
            <person name="Henderson S.N."/>
            <person name="Sutton G.G."/>
            <person name="Wortman J.R."/>
            <person name="Yandell M.D."/>
            <person name="Zhang Q."/>
            <person name="Chen L.X."/>
            <person name="Brandon R.C."/>
            <person name="Rogers Y.-H.C."/>
            <person name="Blazej R.G."/>
            <person name="Champe M."/>
            <person name="Pfeiffer B.D."/>
            <person name="Wan K.H."/>
            <person name="Doyle C."/>
            <person name="Baxter E.G."/>
            <person name="Helt G."/>
            <person name="Nelson C.R."/>
            <person name="Miklos G.L.G."/>
            <person name="Abril J.F."/>
            <person name="Agbayani A."/>
            <person name="An H.-J."/>
            <person name="Andrews-Pfannkoch C."/>
            <person name="Baldwin D."/>
            <person name="Ballew R.M."/>
            <person name="Basu A."/>
            <person name="Baxendale J."/>
            <person name="Bayraktaroglu L."/>
            <person name="Beasley E.M."/>
            <person name="Beeson K.Y."/>
            <person name="Benos P.V."/>
            <person name="Berman B.P."/>
            <person name="Bhandari D."/>
            <person name="Bolshakov S."/>
            <person name="Borkova D."/>
            <person name="Botchan M.R."/>
            <person name="Bouck J."/>
            <person name="Brokstein P."/>
            <person name="Brottier P."/>
            <person name="Burtis K.C."/>
            <person name="Busam D.A."/>
            <person name="Butler H."/>
            <person name="Cadieu E."/>
            <person name="Center A."/>
            <person name="Chandra I."/>
            <person name="Cherry J.M."/>
            <person name="Cawley S."/>
            <person name="Dahlke C."/>
            <person name="Davenport L.B."/>
            <person name="Davies P."/>
            <person name="de Pablos B."/>
            <person name="Delcher A."/>
            <person name="Deng Z."/>
            <person name="Mays A.D."/>
            <person name="Dew I."/>
            <person name="Dietz S.M."/>
            <person name="Dodson K."/>
            <person name="Doup L.E."/>
            <person name="Downes M."/>
            <person name="Dugan-Rocha S."/>
            <person name="Dunkov B.C."/>
            <person name="Dunn P."/>
            <person name="Durbin K.J."/>
            <person name="Evangelista C.C."/>
            <person name="Ferraz C."/>
            <person name="Ferriera S."/>
            <person name="Fleischmann W."/>
            <person name="Fosler C."/>
            <person name="Gabrielian A.E."/>
            <person name="Garg N.S."/>
            <person name="Gelbart W.M."/>
            <person name="Glasser K."/>
            <person name="Glodek A."/>
            <person name="Gong F."/>
            <person name="Gorrell J.H."/>
            <person name="Gu Z."/>
            <person name="Guan P."/>
            <person name="Harris M."/>
            <person name="Harris N.L."/>
            <person name="Harvey D.A."/>
            <person name="Heiman T.J."/>
            <person name="Hernandez J.R."/>
            <person name="Houck J."/>
            <person name="Hostin D."/>
            <person name="Houston K.A."/>
            <person name="Howland T.J."/>
            <person name="Wei M.-H."/>
            <person name="Ibegwam C."/>
            <person name="Jalali M."/>
            <person name="Kalush F."/>
            <person name="Karpen G.H."/>
            <person name="Ke Z."/>
            <person name="Kennison J.A."/>
            <person name="Ketchum K.A."/>
            <person name="Kimmel B.E."/>
            <person name="Kodira C.D."/>
            <person name="Kraft C.L."/>
            <person name="Kravitz S."/>
            <person name="Kulp D."/>
            <person name="Lai Z."/>
            <person name="Lasko P."/>
            <person name="Lei Y."/>
            <person name="Levitsky A.A."/>
            <person name="Li J.H."/>
            <person name="Li Z."/>
            <person name="Liang Y."/>
            <person name="Lin X."/>
            <person name="Liu X."/>
            <person name="Mattei B."/>
            <person name="McIntosh T.C."/>
            <person name="McLeod M.P."/>
            <person name="McPherson D."/>
            <person name="Merkulov G."/>
            <person name="Milshina N.V."/>
            <person name="Mobarry C."/>
            <person name="Morris J."/>
            <person name="Moshrefi A."/>
            <person name="Mount S.M."/>
            <person name="Moy M."/>
            <person name="Murphy B."/>
            <person name="Murphy L."/>
            <person name="Muzny D.M."/>
            <person name="Nelson D.L."/>
            <person name="Nelson D.R."/>
            <person name="Nelson K.A."/>
            <person name="Nixon K."/>
            <person name="Nusskern D.R."/>
            <person name="Pacleb J.M."/>
            <person name="Palazzolo M."/>
            <person name="Pittman G.S."/>
            <person name="Pan S."/>
            <person name="Pollard J."/>
            <person name="Puri V."/>
            <person name="Reese M.G."/>
            <person name="Reinert K."/>
            <person name="Remington K."/>
            <person name="Saunders R.D.C."/>
            <person name="Scheeler F."/>
            <person name="Shen H."/>
            <person name="Shue B.C."/>
            <person name="Siden-Kiamos I."/>
            <person name="Simpson M."/>
            <person name="Skupski M.P."/>
            <person name="Smith T.J."/>
            <person name="Spier E."/>
            <person name="Spradling A.C."/>
            <person name="Stapleton M."/>
            <person name="Strong R."/>
            <person name="Sun E."/>
            <person name="Svirskas R."/>
            <person name="Tector C."/>
            <person name="Turner R."/>
            <person name="Venter E."/>
            <person name="Wang A.H."/>
            <person name="Wang X."/>
            <person name="Wang Z.-Y."/>
            <person name="Wassarman D.A."/>
            <person name="Weinstock G.M."/>
            <person name="Weissenbach J."/>
            <person name="Williams S.M."/>
            <person name="Woodage T."/>
            <person name="Worley K.C."/>
            <person name="Wu D."/>
            <person name="Yang S."/>
            <person name="Yao Q.A."/>
            <person name="Ye J."/>
            <person name="Yeh R.-F."/>
            <person name="Zaveri J.S."/>
            <person name="Zhan M."/>
            <person name="Zhang G."/>
            <person name="Zhao Q."/>
            <person name="Zheng L."/>
            <person name="Zheng X.H."/>
            <person name="Zhong F.N."/>
            <person name="Zhong W."/>
            <person name="Zhou X."/>
            <person name="Zhu S.C."/>
            <person name="Zhu X."/>
            <person name="Smith H.O."/>
            <person name="Gibbs R.A."/>
            <person name="Myers E.W."/>
            <person name="Rubin G.M."/>
            <person name="Venter J.C."/>
        </authorList>
    </citation>
    <scope>NUCLEOTIDE SEQUENCE [LARGE SCALE GENOMIC DNA]</scope>
    <source>
        <strain>Berkeley</strain>
    </source>
</reference>
<reference key="3">
    <citation type="journal article" date="2002" name="Genome Biol.">
        <title>Annotation of the Drosophila melanogaster euchromatic genome: a systematic review.</title>
        <authorList>
            <person name="Misra S."/>
            <person name="Crosby M.A."/>
            <person name="Mungall C.J."/>
            <person name="Matthews B.B."/>
            <person name="Campbell K.S."/>
            <person name="Hradecky P."/>
            <person name="Huang Y."/>
            <person name="Kaminker J.S."/>
            <person name="Millburn G.H."/>
            <person name="Prochnik S.E."/>
            <person name="Smith C.D."/>
            <person name="Tupy J.L."/>
            <person name="Whitfield E.J."/>
            <person name="Bayraktaroglu L."/>
            <person name="Berman B.P."/>
            <person name="Bettencourt B.R."/>
            <person name="Celniker S.E."/>
            <person name="de Grey A.D.N.J."/>
            <person name="Drysdale R.A."/>
            <person name="Harris N.L."/>
            <person name="Richter J."/>
            <person name="Russo S."/>
            <person name="Schroeder A.J."/>
            <person name="Shu S.Q."/>
            <person name="Stapleton M."/>
            <person name="Yamada C."/>
            <person name="Ashburner M."/>
            <person name="Gelbart W.M."/>
            <person name="Rubin G.M."/>
            <person name="Lewis S.E."/>
        </authorList>
    </citation>
    <scope>GENOME REANNOTATION</scope>
    <source>
        <strain>Berkeley</strain>
    </source>
</reference>
<reference key="4">
    <citation type="journal article" date="2002" name="Genome Biol.">
        <title>A Drosophila full-length cDNA resource.</title>
        <authorList>
            <person name="Stapleton M."/>
            <person name="Carlson J.W."/>
            <person name="Brokstein P."/>
            <person name="Yu C."/>
            <person name="Champe M."/>
            <person name="George R.A."/>
            <person name="Guarin H."/>
            <person name="Kronmiller B."/>
            <person name="Pacleb J.M."/>
            <person name="Park S."/>
            <person name="Wan K.H."/>
            <person name="Rubin G.M."/>
            <person name="Celniker S.E."/>
        </authorList>
    </citation>
    <scope>NUCLEOTIDE SEQUENCE [LARGE SCALE MRNA]</scope>
    <source>
        <strain>Berkeley</strain>
        <tissue>Embryo</tissue>
    </source>
</reference>
<reference key="5">
    <citation type="journal article" date="2008" name="J. Proteome Res.">
        <title>Phosphoproteome analysis of Drosophila melanogaster embryos.</title>
        <authorList>
            <person name="Zhai B."/>
            <person name="Villen J."/>
            <person name="Beausoleil S.A."/>
            <person name="Mintseris J."/>
            <person name="Gygi S.P."/>
        </authorList>
    </citation>
    <scope>PHOSPHORYLATION [LARGE SCALE ANALYSIS] AT SER-142</scope>
    <scope>IDENTIFICATION BY MASS SPECTROMETRY</scope>
    <source>
        <tissue>Embryo</tissue>
    </source>
</reference>
<accession>Q27331</accession>
<accession>Q8SXT2</accession>
<accession>Q9VK48</accession>
<sequence>MSNLKRFDDEERESKYGRVFAVSGPVVTAEAMSGSAMYELVRVGYYELVGEIIRLEGDMATIQVYEETSGVTVGDPVLRTGKPLSVELGPGIMGSIFDGIQRPLKDINELTESIYIPKGVNVPSLSRVASWEFNPLNVKVGSHITGGDLYGLVHENTLVKHKMIVNPRAKGTVRYIAPSGNYKVDDVVLETEFDGEITKHTMLQVWPVRQPRPVTEKLPANHPLLTGQRVLDSLFPCVQGGTTAIPGAFGCGKTVISQALSKYSNSDVIIYVGCGERGNEMSEVLRDFPELSVEIDGVTESIMKRTALVANTSNMPVAAREASIYTGITLSEYFRDMGYNVSMMADSTSRWAEALREISGRLAEMPADSGYPAYLGARLASFYERAGRVKCLGNPEREGSVSIVGAVSPPGGDFSDPVTSATLGIVQVFWGLDKKLAQRKHFPSINWLISYSKYMRALDDFYDKNFPEFVPLRTKVKEILQEEEDLSEIVQLVGKASLAETDKITLEVAKLLKDDFLQQNSYSSYDRFCPFYKTVGMLRNIIDFYDMARHSVESTAQSENKITWNVIREAMGNIMYQLSSMKFKDPVKDGEAKIKADFEQLHEDLQQAFRNLED</sequence>
<feature type="chain" id="PRO_0000144567" description="V-type proton ATPase catalytic subunit A isoform 2">
    <location>
        <begin position="1"/>
        <end position="614"/>
    </location>
</feature>
<feature type="binding site" evidence="4">
    <location>
        <begin position="247"/>
        <end position="254"/>
    </location>
    <ligand>
        <name>ATP</name>
        <dbReference type="ChEBI" id="CHEBI:30616"/>
    </ligand>
</feature>
<feature type="modified residue" description="Phosphoserine" evidence="5">
    <location>
        <position position="142"/>
    </location>
</feature>
<feature type="sequence conflict" description="In Ref. 1; AAB02270/AAB02271." evidence="6" ref="1">
    <original>QPR</original>
    <variation>HHA</variation>
    <location>
        <begin position="210"/>
        <end position="212"/>
    </location>
</feature>
<feature type="sequence conflict" description="In Ref. 1; AAB02270/AAB02271." evidence="6" ref="1">
    <original>A</original>
    <variation>R</variation>
    <location>
        <position position="367"/>
    </location>
</feature>
<comment type="function">
    <text evidence="2 3">Catalytic subunit of the V1 complex of vacuolar(H+)-ATPase (V-ATPase), a multisubunit enzyme composed of a peripheral complex (V1) that hydrolyzes ATP and a membrane integral complex (V0) that translocates protons (By similarity). V-ATPase is responsible for acidifying and maintaining the pH of intracellular compartments and in some cell types, is targeted to the plasma membrane, where it is responsible for acidifying the extracellular environment (By similarity).</text>
</comment>
<comment type="catalytic activity">
    <reaction evidence="3">
        <text>ATP + H2O + 4 H(+)(in) = ADP + phosphate + 5 H(+)(out)</text>
        <dbReference type="Rhea" id="RHEA:57720"/>
        <dbReference type="ChEBI" id="CHEBI:15377"/>
        <dbReference type="ChEBI" id="CHEBI:15378"/>
        <dbReference type="ChEBI" id="CHEBI:30616"/>
        <dbReference type="ChEBI" id="CHEBI:43474"/>
        <dbReference type="ChEBI" id="CHEBI:456216"/>
        <dbReference type="EC" id="7.1.2.2"/>
    </reaction>
</comment>
<comment type="activity regulation">
    <text evidence="1">ATP hydrolysis occurs at the interface between the nucleotide-binding domains of subunits A and B (By similarity). ATP hydrolysis triggers a conformational change in the subunits D and F, which induces a shift of subunit d (By similarity). The c-ring is subsequently rotated and results in a continuous proton translocation across the membrane (By similarity).</text>
</comment>
<comment type="subunit">
    <text evidence="2">V-ATPase is a heteromultimeric enzyme made up of two complexes: the ATP-hydrolytic V1 complex and the proton translocation V0 complex (By similarity). The V1 complex consists of three catalytic AB heterodimers that form a heterohexamer, three peripheral stalks each consisting of EG heterodimers, one central rotor including subunits D and F, and the regulatory subunits C and H (By similarity). The proton translocation complex V0 consists of the proton transport subunit a, a ring of proteolipid subunits c9c'', rotary subunit d, subunits e and f, and the accessory subunits VhaAC45 and ATP6AP2 (By similarity).</text>
</comment>
<comment type="similarity">
    <text evidence="6">Belongs to the ATPase alpha/beta chains family.</text>
</comment>
<keyword id="KW-0067">ATP-binding</keyword>
<keyword id="KW-0375">Hydrogen ion transport</keyword>
<keyword id="KW-0406">Ion transport</keyword>
<keyword id="KW-0547">Nucleotide-binding</keyword>
<keyword id="KW-0597">Phosphoprotein</keyword>
<keyword id="KW-1185">Reference proteome</keyword>
<keyword id="KW-1278">Translocase</keyword>
<keyword id="KW-0813">Transport</keyword>
<name>VATA2_DROME</name>
<gene>
    <name type="primary">Vha68-2</name>
    <name type="synonym">VHAA2</name>
    <name type="ORF">CG3762</name>
</gene>
<organism>
    <name type="scientific">Drosophila melanogaster</name>
    <name type="common">Fruit fly</name>
    <dbReference type="NCBI Taxonomy" id="7227"/>
    <lineage>
        <taxon>Eukaryota</taxon>
        <taxon>Metazoa</taxon>
        <taxon>Ecdysozoa</taxon>
        <taxon>Arthropoda</taxon>
        <taxon>Hexapoda</taxon>
        <taxon>Insecta</taxon>
        <taxon>Pterygota</taxon>
        <taxon>Neoptera</taxon>
        <taxon>Endopterygota</taxon>
        <taxon>Diptera</taxon>
        <taxon>Brachycera</taxon>
        <taxon>Muscomorpha</taxon>
        <taxon>Ephydroidea</taxon>
        <taxon>Drosophilidae</taxon>
        <taxon>Drosophila</taxon>
        <taxon>Sophophora</taxon>
    </lineage>
</organism>
<dbReference type="EC" id="7.1.2.2" evidence="3"/>
<dbReference type="EMBL" id="U59146">
    <property type="protein sequence ID" value="AAB02270.1"/>
    <property type="molecule type" value="mRNA"/>
</dbReference>
<dbReference type="EMBL" id="U59147">
    <property type="protein sequence ID" value="AAB02271.1"/>
    <property type="molecule type" value="Genomic_DNA"/>
</dbReference>
<dbReference type="EMBL" id="AE014134">
    <property type="protein sequence ID" value="AAF53231.1"/>
    <property type="molecule type" value="Genomic_DNA"/>
</dbReference>
<dbReference type="EMBL" id="AY084150">
    <property type="protein sequence ID" value="AAL89888.1"/>
    <property type="molecule type" value="mRNA"/>
</dbReference>
<dbReference type="RefSeq" id="NP_001246015.1">
    <property type="nucleotide sequence ID" value="NM_001259086.2"/>
</dbReference>
<dbReference type="RefSeq" id="NP_001260424.1">
    <property type="nucleotide sequence ID" value="NM_001273495.1"/>
</dbReference>
<dbReference type="RefSeq" id="NP_001260425.1">
    <property type="nucleotide sequence ID" value="NM_001273496.1"/>
</dbReference>
<dbReference type="RefSeq" id="NP_652004.2">
    <property type="nucleotide sequence ID" value="NM_143747.3"/>
</dbReference>
<dbReference type="RefSeq" id="NP_723775.1">
    <property type="nucleotide sequence ID" value="NM_165021.2"/>
</dbReference>
<dbReference type="RefSeq" id="NP_723776.1">
    <property type="nucleotide sequence ID" value="NM_165022.2"/>
</dbReference>
<dbReference type="SMR" id="Q27331"/>
<dbReference type="BioGRID" id="69430">
    <property type="interactions" value="56"/>
</dbReference>
<dbReference type="FunCoup" id="Q27331">
    <property type="interactions" value="1719"/>
</dbReference>
<dbReference type="IntAct" id="Q27331">
    <property type="interactions" value="161"/>
</dbReference>
<dbReference type="STRING" id="7227.FBpp0080001"/>
<dbReference type="iPTMnet" id="Q27331"/>
<dbReference type="PaxDb" id="7227-FBpp0079999"/>
<dbReference type="DNASU" id="45012"/>
<dbReference type="EnsemblMetazoa" id="FBtr0080418">
    <property type="protein sequence ID" value="FBpp0079999"/>
    <property type="gene ID" value="FBgn0263598"/>
</dbReference>
<dbReference type="EnsemblMetazoa" id="FBtr0080419">
    <property type="protein sequence ID" value="FBpp0080000"/>
    <property type="gene ID" value="FBgn0263598"/>
</dbReference>
<dbReference type="EnsemblMetazoa" id="FBtr0080420">
    <property type="protein sequence ID" value="FBpp0080001"/>
    <property type="gene ID" value="FBgn0263598"/>
</dbReference>
<dbReference type="EnsemblMetazoa" id="FBtr0305551">
    <property type="protein sequence ID" value="FBpp0294002"/>
    <property type="gene ID" value="FBgn0263598"/>
</dbReference>
<dbReference type="EnsemblMetazoa" id="FBtr0336613">
    <property type="protein sequence ID" value="FBpp0307596"/>
    <property type="gene ID" value="FBgn0263598"/>
</dbReference>
<dbReference type="EnsemblMetazoa" id="FBtr0336614">
    <property type="protein sequence ID" value="FBpp0307597"/>
    <property type="gene ID" value="FBgn0263598"/>
</dbReference>
<dbReference type="GeneID" id="45012"/>
<dbReference type="KEGG" id="dme:Dmel_CG3762"/>
<dbReference type="UCSC" id="CG3762-RA">
    <property type="organism name" value="d. melanogaster"/>
</dbReference>
<dbReference type="AGR" id="FB:FBgn0263598"/>
<dbReference type="CTD" id="45012"/>
<dbReference type="FlyBase" id="FBgn0263598">
    <property type="gene designation" value="Vha68-2"/>
</dbReference>
<dbReference type="VEuPathDB" id="VectorBase:FBgn0263598"/>
<dbReference type="eggNOG" id="KOG1352">
    <property type="taxonomic scope" value="Eukaryota"/>
</dbReference>
<dbReference type="GeneTree" id="ENSGT00550000074787"/>
<dbReference type="HOGENOM" id="CLU_008162_3_1_1"/>
<dbReference type="InParanoid" id="Q27331"/>
<dbReference type="OMA" id="RIVKTFW"/>
<dbReference type="OrthoDB" id="1676488at2759"/>
<dbReference type="PhylomeDB" id="Q27331"/>
<dbReference type="Reactome" id="R-DME-1222556">
    <property type="pathway name" value="ROS and RNS production in phagocytes"/>
</dbReference>
<dbReference type="Reactome" id="R-DME-77387">
    <property type="pathway name" value="Insulin receptor recycling"/>
</dbReference>
<dbReference type="Reactome" id="R-DME-917977">
    <property type="pathway name" value="Transferrin endocytosis and recycling"/>
</dbReference>
<dbReference type="Reactome" id="R-DME-9639288">
    <property type="pathway name" value="Amino acids regulate mTORC1"/>
</dbReference>
<dbReference type="Reactome" id="R-DME-983712">
    <property type="pathway name" value="Ion channel transport"/>
</dbReference>
<dbReference type="SignaLink" id="Q27331"/>
<dbReference type="BioGRID-ORCS" id="45012">
    <property type="hits" value="0 hits in 3 CRISPR screens"/>
</dbReference>
<dbReference type="GenomeRNAi" id="45012"/>
<dbReference type="PRO" id="PR:Q27331"/>
<dbReference type="Proteomes" id="UP000000803">
    <property type="component" value="Chromosome 2L"/>
</dbReference>
<dbReference type="Bgee" id="FBgn0263598">
    <property type="expression patterns" value="Expressed in adult hindgut (Drosophila) and 202 other cell types or tissues"/>
</dbReference>
<dbReference type="ExpressionAtlas" id="Q27331">
    <property type="expression patterns" value="baseline and differential"/>
</dbReference>
<dbReference type="GO" id="GO:0005886">
    <property type="term" value="C:plasma membrane"/>
    <property type="evidence" value="ECO:0007005"/>
    <property type="project" value="FlyBase"/>
</dbReference>
<dbReference type="GO" id="GO:0033181">
    <property type="term" value="C:plasma membrane proton-transporting V-type ATPase complex"/>
    <property type="evidence" value="ECO:0000315"/>
    <property type="project" value="FlyBase"/>
</dbReference>
<dbReference type="GO" id="GO:0000221">
    <property type="term" value="C:vacuolar proton-transporting V-type ATPase, V1 domain"/>
    <property type="evidence" value="ECO:0000250"/>
    <property type="project" value="FlyBase"/>
</dbReference>
<dbReference type="GO" id="GO:0005524">
    <property type="term" value="F:ATP binding"/>
    <property type="evidence" value="ECO:0007669"/>
    <property type="project" value="UniProtKB-KW"/>
</dbReference>
<dbReference type="GO" id="GO:0016887">
    <property type="term" value="F:ATP hydrolysis activity"/>
    <property type="evidence" value="ECO:0007669"/>
    <property type="project" value="InterPro"/>
</dbReference>
<dbReference type="GO" id="GO:0046961">
    <property type="term" value="F:proton-transporting ATPase activity, rotational mechanism"/>
    <property type="evidence" value="ECO:0000318"/>
    <property type="project" value="GO_Central"/>
</dbReference>
<dbReference type="GO" id="GO:0046034">
    <property type="term" value="P:ATP metabolic process"/>
    <property type="evidence" value="ECO:0007669"/>
    <property type="project" value="InterPro"/>
</dbReference>
<dbReference type="GO" id="GO:0048388">
    <property type="term" value="P:endosomal lumen acidification"/>
    <property type="evidence" value="ECO:0000315"/>
    <property type="project" value="FlyBase"/>
</dbReference>
<dbReference type="GO" id="GO:0016197">
    <property type="term" value="P:endosomal transport"/>
    <property type="evidence" value="ECO:0000315"/>
    <property type="project" value="FlyBase"/>
</dbReference>
<dbReference type="GO" id="GO:0007446">
    <property type="term" value="P:imaginal disc growth"/>
    <property type="evidence" value="ECO:0000315"/>
    <property type="project" value="FlyBase"/>
</dbReference>
<dbReference type="GO" id="GO:0035149">
    <property type="term" value="P:lumen formation, open tracheal system"/>
    <property type="evidence" value="ECO:0000315"/>
    <property type="project" value="FlyBase"/>
</dbReference>
<dbReference type="GO" id="GO:1902600">
    <property type="term" value="P:proton transmembrane transport"/>
    <property type="evidence" value="ECO:0000318"/>
    <property type="project" value="GO_Central"/>
</dbReference>
<dbReference type="CDD" id="cd18111">
    <property type="entry name" value="ATP-synt_V_A-type_alpha_C"/>
    <property type="match status" value="1"/>
</dbReference>
<dbReference type="CDD" id="cd18119">
    <property type="entry name" value="ATP-synt_V_A-type_alpha_N"/>
    <property type="match status" value="1"/>
</dbReference>
<dbReference type="CDD" id="cd01134">
    <property type="entry name" value="V_A-ATPase_A"/>
    <property type="match status" value="1"/>
</dbReference>
<dbReference type="FunFam" id="1.10.1140.10:FF:000002">
    <property type="entry name" value="V-type proton ATPase catalytic subunit A"/>
    <property type="match status" value="1"/>
</dbReference>
<dbReference type="FunFam" id="2.40.30.20:FF:000002">
    <property type="entry name" value="V-type proton ATPase catalytic subunit A"/>
    <property type="match status" value="1"/>
</dbReference>
<dbReference type="FunFam" id="2.40.50.100:FF:000008">
    <property type="entry name" value="V-type proton ATPase catalytic subunit A"/>
    <property type="match status" value="1"/>
</dbReference>
<dbReference type="FunFam" id="3.40.50.300:FF:000052">
    <property type="entry name" value="V-type proton ATPase catalytic subunit A"/>
    <property type="match status" value="1"/>
</dbReference>
<dbReference type="Gene3D" id="2.40.30.20">
    <property type="match status" value="1"/>
</dbReference>
<dbReference type="Gene3D" id="2.40.50.100">
    <property type="match status" value="1"/>
</dbReference>
<dbReference type="Gene3D" id="1.10.1140.10">
    <property type="entry name" value="Bovine Mitochondrial F1-atpase, Atp Synthase Beta Chain, Chain D, domain 3"/>
    <property type="match status" value="1"/>
</dbReference>
<dbReference type="Gene3D" id="3.40.50.300">
    <property type="entry name" value="P-loop containing nucleotide triphosphate hydrolases"/>
    <property type="match status" value="1"/>
</dbReference>
<dbReference type="HAMAP" id="MF_00309">
    <property type="entry name" value="ATP_synth_A_arch"/>
    <property type="match status" value="1"/>
</dbReference>
<dbReference type="InterPro" id="IPR055190">
    <property type="entry name" value="ATP-synt_VA_C"/>
</dbReference>
<dbReference type="InterPro" id="IPR031686">
    <property type="entry name" value="ATP-synth_a_Xtn"/>
</dbReference>
<dbReference type="InterPro" id="IPR023366">
    <property type="entry name" value="ATP_synth_asu-like_sf"/>
</dbReference>
<dbReference type="InterPro" id="IPR020003">
    <property type="entry name" value="ATPase_a/bsu_AS"/>
</dbReference>
<dbReference type="InterPro" id="IPR004100">
    <property type="entry name" value="ATPase_F1/V1/A1_a/bsu_N"/>
</dbReference>
<dbReference type="InterPro" id="IPR036121">
    <property type="entry name" value="ATPase_F1/V1/A1_a/bsu_N_sf"/>
</dbReference>
<dbReference type="InterPro" id="IPR000194">
    <property type="entry name" value="ATPase_F1/V1/A1_a/bsu_nucl-bd"/>
</dbReference>
<dbReference type="InterPro" id="IPR024034">
    <property type="entry name" value="ATPase_F1/V1_b/a_C"/>
</dbReference>
<dbReference type="InterPro" id="IPR005725">
    <property type="entry name" value="ATPase_V1-cplx_asu"/>
</dbReference>
<dbReference type="InterPro" id="IPR027417">
    <property type="entry name" value="P-loop_NTPase"/>
</dbReference>
<dbReference type="InterPro" id="IPR022878">
    <property type="entry name" value="V-ATPase_asu"/>
</dbReference>
<dbReference type="NCBIfam" id="NF003220">
    <property type="entry name" value="PRK04192.1"/>
    <property type="match status" value="1"/>
</dbReference>
<dbReference type="NCBIfam" id="TIGR01042">
    <property type="entry name" value="V-ATPase_V1_A"/>
    <property type="match status" value="1"/>
</dbReference>
<dbReference type="PANTHER" id="PTHR43607:SF1">
    <property type="entry name" value="H(+)-TRANSPORTING TWO-SECTOR ATPASE"/>
    <property type="match status" value="1"/>
</dbReference>
<dbReference type="PANTHER" id="PTHR43607">
    <property type="entry name" value="V-TYPE PROTON ATPASE CATALYTIC SUBUNIT A"/>
    <property type="match status" value="1"/>
</dbReference>
<dbReference type="Pfam" id="PF00006">
    <property type="entry name" value="ATP-synt_ab"/>
    <property type="match status" value="1"/>
</dbReference>
<dbReference type="Pfam" id="PF02874">
    <property type="entry name" value="ATP-synt_ab_N"/>
    <property type="match status" value="1"/>
</dbReference>
<dbReference type="Pfam" id="PF16886">
    <property type="entry name" value="ATP-synt_ab_Xtn"/>
    <property type="match status" value="1"/>
</dbReference>
<dbReference type="Pfam" id="PF22919">
    <property type="entry name" value="ATP-synt_VA_C"/>
    <property type="match status" value="1"/>
</dbReference>
<dbReference type="SUPFAM" id="SSF47917">
    <property type="entry name" value="C-terminal domain of alpha and beta subunits of F1 ATP synthase"/>
    <property type="match status" value="1"/>
</dbReference>
<dbReference type="SUPFAM" id="SSF50615">
    <property type="entry name" value="N-terminal domain of alpha and beta subunits of F1 ATP synthase"/>
    <property type="match status" value="1"/>
</dbReference>
<dbReference type="SUPFAM" id="SSF52540">
    <property type="entry name" value="P-loop containing nucleoside triphosphate hydrolases"/>
    <property type="match status" value="1"/>
</dbReference>
<dbReference type="PROSITE" id="PS00152">
    <property type="entry name" value="ATPASE_ALPHA_BETA"/>
    <property type="match status" value="1"/>
</dbReference>
<protein>
    <recommendedName>
        <fullName>V-type proton ATPase catalytic subunit A isoform 2</fullName>
        <shortName>V-ATPase subunit A 2</shortName>
        <ecNumber evidence="3">7.1.2.2</ecNumber>
    </recommendedName>
    <alternativeName>
        <fullName>V-ATPase 69 kDa subunit 2</fullName>
    </alternativeName>
    <alternativeName>
        <fullName>Vacuolar proton pump subunit alpha 2</fullName>
    </alternativeName>
</protein>
<evidence type="ECO:0000250" key="1">
    <source>
        <dbReference type="UniProtKB" id="P31404"/>
    </source>
</evidence>
<evidence type="ECO:0000250" key="2">
    <source>
        <dbReference type="UniProtKB" id="P38606"/>
    </source>
</evidence>
<evidence type="ECO:0000250" key="3">
    <source>
        <dbReference type="UniProtKB" id="P50516"/>
    </source>
</evidence>
<evidence type="ECO:0000255" key="4"/>
<evidence type="ECO:0000269" key="5">
    <source>
    </source>
</evidence>
<evidence type="ECO:0000305" key="6"/>